<evidence type="ECO:0000255" key="1">
    <source>
        <dbReference type="HAMAP-Rule" id="MF_00037"/>
    </source>
</evidence>
<comment type="function">
    <text evidence="1">Cell wall formation.</text>
</comment>
<comment type="catalytic activity">
    <reaction evidence="1">
        <text>UDP-N-acetyl-alpha-D-muramate + NADP(+) = UDP-N-acetyl-3-O-(1-carboxyvinyl)-alpha-D-glucosamine + NADPH + H(+)</text>
        <dbReference type="Rhea" id="RHEA:12248"/>
        <dbReference type="ChEBI" id="CHEBI:15378"/>
        <dbReference type="ChEBI" id="CHEBI:57783"/>
        <dbReference type="ChEBI" id="CHEBI:58349"/>
        <dbReference type="ChEBI" id="CHEBI:68483"/>
        <dbReference type="ChEBI" id="CHEBI:70757"/>
        <dbReference type="EC" id="1.3.1.98"/>
    </reaction>
</comment>
<comment type="cofactor">
    <cofactor evidence="1">
        <name>FAD</name>
        <dbReference type="ChEBI" id="CHEBI:57692"/>
    </cofactor>
</comment>
<comment type="pathway">
    <text evidence="1">Cell wall biogenesis; peptidoglycan biosynthesis.</text>
</comment>
<comment type="subcellular location">
    <subcellularLocation>
        <location evidence="1">Cytoplasm</location>
    </subcellularLocation>
</comment>
<comment type="similarity">
    <text evidence="1">Belongs to the MurB family.</text>
</comment>
<reference key="1">
    <citation type="journal article" date="2006" name="Proc. Natl. Acad. Sci. U.S.A.">
        <title>Genome sequence of Synechococcus CC9311: insights into adaptation to a coastal environment.</title>
        <authorList>
            <person name="Palenik B."/>
            <person name="Ren Q."/>
            <person name="Dupont C.L."/>
            <person name="Myers G.S."/>
            <person name="Heidelberg J.F."/>
            <person name="Badger J.H."/>
            <person name="Madupu R."/>
            <person name="Nelson W.C."/>
            <person name="Brinkac L.M."/>
            <person name="Dodson R.J."/>
            <person name="Durkin A.S."/>
            <person name="Daugherty S.C."/>
            <person name="Sullivan S.A."/>
            <person name="Khouri H."/>
            <person name="Mohamoud Y."/>
            <person name="Halpin R."/>
            <person name="Paulsen I.T."/>
        </authorList>
    </citation>
    <scope>NUCLEOTIDE SEQUENCE [LARGE SCALE GENOMIC DNA]</scope>
    <source>
        <strain>CC9311</strain>
    </source>
</reference>
<sequence length="312" mass="33169">MFTGDRGLNALLESGVLQQEVPLANYTTWRVGGPAQWLAEPNNAEQCLELLQWAKAEGLTTRVIGAGSNLLIADAGLPGLTLCLRRLQGSQLDAESGQVKALAGEPLPTLARRAARLGLHGLEWAVGIPGTVGGAAAMNAGAQGGSTADCLTAVEVIDQSLTDTVKTTTLLSNTDLAYDYRHSLLQGSDQMVVAAQFQLEPGHDAKELMRKTSGNLSHRTTTQPYQWPSCGSVFRNPEPEKAGQLIEGLGLKGRRIGGAEVSSVHANFIVNVGDATADDIRALIDLVQNEVERMNGITLHPEVKRLGFQTTD</sequence>
<name>MURB_SYNS3</name>
<organism>
    <name type="scientific">Synechococcus sp. (strain CC9311)</name>
    <dbReference type="NCBI Taxonomy" id="64471"/>
    <lineage>
        <taxon>Bacteria</taxon>
        <taxon>Bacillati</taxon>
        <taxon>Cyanobacteriota</taxon>
        <taxon>Cyanophyceae</taxon>
        <taxon>Synechococcales</taxon>
        <taxon>Synechococcaceae</taxon>
        <taxon>Synechococcus</taxon>
    </lineage>
</organism>
<keyword id="KW-0131">Cell cycle</keyword>
<keyword id="KW-0132">Cell division</keyword>
<keyword id="KW-0133">Cell shape</keyword>
<keyword id="KW-0961">Cell wall biogenesis/degradation</keyword>
<keyword id="KW-0963">Cytoplasm</keyword>
<keyword id="KW-0274">FAD</keyword>
<keyword id="KW-0285">Flavoprotein</keyword>
<keyword id="KW-0521">NADP</keyword>
<keyword id="KW-0560">Oxidoreductase</keyword>
<keyword id="KW-0573">Peptidoglycan synthesis</keyword>
<keyword id="KW-1185">Reference proteome</keyword>
<accession>Q0IE56</accession>
<gene>
    <name evidence="1" type="primary">murB</name>
    <name type="ordered locus">sync_0027</name>
</gene>
<feature type="chain" id="PRO_0000332510" description="UDP-N-acetylenolpyruvoylglucosamine reductase">
    <location>
        <begin position="1"/>
        <end position="312"/>
    </location>
</feature>
<feature type="domain" description="FAD-binding PCMH-type" evidence="1">
    <location>
        <begin position="30"/>
        <end position="202"/>
    </location>
</feature>
<feature type="active site" evidence="1">
    <location>
        <position position="181"/>
    </location>
</feature>
<feature type="active site" description="Proton donor" evidence="1">
    <location>
        <position position="232"/>
    </location>
</feature>
<feature type="active site" evidence="1">
    <location>
        <position position="302"/>
    </location>
</feature>
<protein>
    <recommendedName>
        <fullName evidence="1">UDP-N-acetylenolpyruvoylglucosamine reductase</fullName>
        <ecNumber evidence="1">1.3.1.98</ecNumber>
    </recommendedName>
    <alternativeName>
        <fullName evidence="1">UDP-N-acetylmuramate dehydrogenase</fullName>
    </alternativeName>
</protein>
<dbReference type="EC" id="1.3.1.98" evidence="1"/>
<dbReference type="EMBL" id="CP000435">
    <property type="protein sequence ID" value="ABI47331.1"/>
    <property type="molecule type" value="Genomic_DNA"/>
</dbReference>
<dbReference type="RefSeq" id="WP_011618018.1">
    <property type="nucleotide sequence ID" value="NC_008319.1"/>
</dbReference>
<dbReference type="SMR" id="Q0IE56"/>
<dbReference type="STRING" id="64471.sync_0027"/>
<dbReference type="KEGG" id="syg:sync_0027"/>
<dbReference type="eggNOG" id="COG0812">
    <property type="taxonomic scope" value="Bacteria"/>
</dbReference>
<dbReference type="HOGENOM" id="CLU_035304_1_1_3"/>
<dbReference type="OrthoDB" id="9804753at2"/>
<dbReference type="UniPathway" id="UPA00219"/>
<dbReference type="Proteomes" id="UP000001961">
    <property type="component" value="Chromosome"/>
</dbReference>
<dbReference type="GO" id="GO:0005829">
    <property type="term" value="C:cytosol"/>
    <property type="evidence" value="ECO:0007669"/>
    <property type="project" value="TreeGrafter"/>
</dbReference>
<dbReference type="GO" id="GO:0071949">
    <property type="term" value="F:FAD binding"/>
    <property type="evidence" value="ECO:0007669"/>
    <property type="project" value="InterPro"/>
</dbReference>
<dbReference type="GO" id="GO:0008762">
    <property type="term" value="F:UDP-N-acetylmuramate dehydrogenase activity"/>
    <property type="evidence" value="ECO:0007669"/>
    <property type="project" value="UniProtKB-UniRule"/>
</dbReference>
<dbReference type="GO" id="GO:0051301">
    <property type="term" value="P:cell division"/>
    <property type="evidence" value="ECO:0007669"/>
    <property type="project" value="UniProtKB-KW"/>
</dbReference>
<dbReference type="GO" id="GO:0071555">
    <property type="term" value="P:cell wall organization"/>
    <property type="evidence" value="ECO:0007669"/>
    <property type="project" value="UniProtKB-KW"/>
</dbReference>
<dbReference type="GO" id="GO:0009252">
    <property type="term" value="P:peptidoglycan biosynthetic process"/>
    <property type="evidence" value="ECO:0007669"/>
    <property type="project" value="UniProtKB-UniRule"/>
</dbReference>
<dbReference type="GO" id="GO:0008360">
    <property type="term" value="P:regulation of cell shape"/>
    <property type="evidence" value="ECO:0007669"/>
    <property type="project" value="UniProtKB-KW"/>
</dbReference>
<dbReference type="Gene3D" id="3.30.465.10">
    <property type="match status" value="1"/>
</dbReference>
<dbReference type="Gene3D" id="3.90.78.10">
    <property type="entry name" value="UDP-N-acetylenolpyruvoylglucosamine reductase, C-terminal domain"/>
    <property type="match status" value="1"/>
</dbReference>
<dbReference type="Gene3D" id="3.30.43.10">
    <property type="entry name" value="Uridine Diphospho-n-acetylenolpyruvylglucosamine Reductase, domain 2"/>
    <property type="match status" value="1"/>
</dbReference>
<dbReference type="HAMAP" id="MF_00037">
    <property type="entry name" value="MurB"/>
    <property type="match status" value="1"/>
</dbReference>
<dbReference type="InterPro" id="IPR016166">
    <property type="entry name" value="FAD-bd_PCMH"/>
</dbReference>
<dbReference type="InterPro" id="IPR036318">
    <property type="entry name" value="FAD-bd_PCMH-like_sf"/>
</dbReference>
<dbReference type="InterPro" id="IPR016167">
    <property type="entry name" value="FAD-bd_PCMH_sub1"/>
</dbReference>
<dbReference type="InterPro" id="IPR016169">
    <property type="entry name" value="FAD-bd_PCMH_sub2"/>
</dbReference>
<dbReference type="InterPro" id="IPR003170">
    <property type="entry name" value="MurB"/>
</dbReference>
<dbReference type="InterPro" id="IPR011601">
    <property type="entry name" value="MurB_C"/>
</dbReference>
<dbReference type="InterPro" id="IPR036635">
    <property type="entry name" value="MurB_C_sf"/>
</dbReference>
<dbReference type="InterPro" id="IPR006094">
    <property type="entry name" value="Oxid_FAD_bind_N"/>
</dbReference>
<dbReference type="NCBIfam" id="TIGR00179">
    <property type="entry name" value="murB"/>
    <property type="match status" value="1"/>
</dbReference>
<dbReference type="NCBIfam" id="NF010480">
    <property type="entry name" value="PRK13905.1"/>
    <property type="match status" value="1"/>
</dbReference>
<dbReference type="PANTHER" id="PTHR21071">
    <property type="entry name" value="UDP-N-ACETYLENOLPYRUVOYLGLUCOSAMINE REDUCTASE"/>
    <property type="match status" value="1"/>
</dbReference>
<dbReference type="PANTHER" id="PTHR21071:SF4">
    <property type="entry name" value="UDP-N-ACETYLENOLPYRUVOYLGLUCOSAMINE REDUCTASE"/>
    <property type="match status" value="1"/>
</dbReference>
<dbReference type="Pfam" id="PF01565">
    <property type="entry name" value="FAD_binding_4"/>
    <property type="match status" value="1"/>
</dbReference>
<dbReference type="Pfam" id="PF02873">
    <property type="entry name" value="MurB_C"/>
    <property type="match status" value="1"/>
</dbReference>
<dbReference type="SUPFAM" id="SSF56176">
    <property type="entry name" value="FAD-binding/transporter-associated domain-like"/>
    <property type="match status" value="1"/>
</dbReference>
<dbReference type="SUPFAM" id="SSF56194">
    <property type="entry name" value="Uridine diphospho-N-Acetylenolpyruvylglucosamine reductase, MurB, C-terminal domain"/>
    <property type="match status" value="1"/>
</dbReference>
<dbReference type="PROSITE" id="PS51387">
    <property type="entry name" value="FAD_PCMH"/>
    <property type="match status" value="1"/>
</dbReference>
<proteinExistence type="inferred from homology"/>